<gene>
    <name type="primary">vit-6</name>
    <name type="ORF">K07H8.6</name>
</gene>
<feature type="signal peptide" evidence="1">
    <location>
        <begin position="1"/>
        <end position="15"/>
    </location>
</feature>
<feature type="chain" id="PRO_0000041537" description="Vitellogenin-6">
    <location>
        <begin position="16"/>
        <end position="1651"/>
    </location>
</feature>
<feature type="domain" description="Vitellogenin" evidence="2">
    <location>
        <begin position="34"/>
        <end position="716"/>
    </location>
</feature>
<feature type="domain" description="VWFD" evidence="3">
    <location>
        <begin position="1340"/>
        <end position="1515"/>
    </location>
</feature>
<feature type="region of interest" description="Disordered" evidence="4">
    <location>
        <begin position="1527"/>
        <end position="1556"/>
    </location>
</feature>
<feature type="glycosylation site" description="N-linked (GlcNAc...) asparagine" evidence="5">
    <location>
        <position position="252"/>
    </location>
</feature>
<feature type="glycosylation site" description="N-linked (GlcNAc...) asparagine" evidence="5 6">
    <location>
        <position position="1288"/>
    </location>
</feature>
<feature type="disulfide bond" evidence="3">
    <location>
        <begin position="1342"/>
        <end position="1479"/>
    </location>
</feature>
<feature type="disulfide bond" evidence="3">
    <location>
        <begin position="1364"/>
        <end position="1514"/>
    </location>
</feature>
<feature type="splice variant" id="VSP_020107" description="In isoform a." evidence="8">
    <location>
        <position position="1591"/>
    </location>
</feature>
<feature type="sequence conflict" description="In Ref. 1; CAA39670, 3; AAA28165 and 4; CAA26533." evidence="8" ref="1 3 4">
    <original>N</original>
    <variation>F</variation>
    <location>
        <position position="23"/>
    </location>
</feature>
<feature type="sequence conflict" description="In Ref. 1; CAA39670 and 3; AAA28165." evidence="8" ref="1 3">
    <original>E</original>
    <variation>K</variation>
    <location>
        <position position="206"/>
    </location>
</feature>
<feature type="sequence conflict" description="In Ref. 1; CAA39670 and 3; AAA28165." evidence="8" ref="1 3">
    <original>F</original>
    <variation>L</variation>
    <location>
        <position position="215"/>
    </location>
</feature>
<feature type="sequence conflict" description="In Ref. 1; CAA39670." evidence="8" ref="1">
    <original>A</original>
    <variation>P</variation>
    <location>
        <position position="371"/>
    </location>
</feature>
<feature type="sequence conflict" description="In Ref. 1; CAA39670." evidence="8" ref="1">
    <original>A</original>
    <variation>R</variation>
    <location>
        <position position="417"/>
    </location>
</feature>
<feature type="sequence conflict" description="In Ref. 1; CAA39670." evidence="8" ref="1">
    <original>N</original>
    <variation>D</variation>
    <location>
        <position position="634"/>
    </location>
</feature>
<feature type="sequence conflict" description="In Ref. 1; CAA39670." evidence="8" ref="1">
    <original>KL</original>
    <variation>NV</variation>
    <location>
        <begin position="1623"/>
        <end position="1624"/>
    </location>
</feature>
<name>VIT6_CAEEL</name>
<comment type="function">
    <text evidence="7 8">Precursor of the egg-yolk proteins that are sources of nutrients during embryonic development (Probable). May play a role in cholesterol uptake. May be involved in thermotolerance (PubMed:24957743).</text>
</comment>
<comment type="subcellular location">
    <subcellularLocation>
        <location>Secreted</location>
    </subcellularLocation>
</comment>
<comment type="alternative products">
    <event type="alternative splicing"/>
    <isoform>
        <id>P18948-1</id>
        <name>c</name>
        <sequence type="displayed"/>
    </isoform>
    <isoform>
        <id>P18948-2</id>
        <name>a</name>
        <sequence type="described" ref="VSP_020107"/>
    </isoform>
</comment>
<comment type="tissue specificity">
    <text>Synthesized in Caenorhabditis only by 32 cells building the intestine of adult hermaphroditic individuals; they are cotranslationally secreted into the body cavity and subsequently taken up by the gonad.</text>
</comment>
<comment type="disruption phenotype">
    <text evidence="7">RNAi-mediated knockdown causes a reduction in the uptake of cholesterol analog dehydroergosterol (DHE). Simultaneous RNAi-mediated knockdown of zmp-2 prevents a reduction in survival upon heat stress.</text>
</comment>
<keyword id="KW-0025">Alternative splicing</keyword>
<keyword id="KW-0903">Direct protein sequencing</keyword>
<keyword id="KW-1015">Disulfide bond</keyword>
<keyword id="KW-0325">Glycoprotein</keyword>
<keyword id="KW-1185">Reference proteome</keyword>
<keyword id="KW-0964">Secreted</keyword>
<keyword id="KW-0732">Signal</keyword>
<keyword id="KW-0758">Storage protein</keyword>
<sequence length="1651" mass="193318">MKFFIALALLGAALASTHLDRYNSIERNIQESSFRAGREYRYLFNGQLSAGLPVPSTPQGISRLQSQVTLQWTDGNTVRMQLQKTRFATSQQESNSMKMLPFERFEEVERMNREHQELLSMPVEFDYEHGLVREIRFAENDQPWSENIKRAVINMLQVNILKKEKYEGAEKSDNQEPTFSFTNVERTLEGECEVLYTVEEIKKEDEQRWAKSINFDKCTRRPYIHHVQTPVCKDCQQTLEQDKMSSTVLNYNITGTSSSFLINSVELRSQHLFAPISEKHQLVSAFTLNTMELIYAGEKKTEIKQVRNEKTSELVYNQESEWAEQQWAQTGEEKYLRQLPQWTENKVEMIKKMFSLMAKQIEQGEAELEAAHTVARIVKVLRECNEEQLEQIYRHVAEHKDEKIAEQLRSIYFNTLALAGTRVTIQQFVDKVQSRKNIAPLKASVAIKTLVDMRYPSLAIAEDIARLCESDVSSSFPALRQSCWLTYGAIVNGVCGQTPRVFVQKNGVKMCPRDAKQRIVDKLVQQFESASTRYEKVLALKTLANAGLDLSVYPLEKIILNEQHETTIRTQAIESFRRLRTQMPTKIQRVLMPVYLNRQQPQHIRMSALHQIIYTQPEWSVLSQIGNQLRQERNQQVRAFTLSLLRSYANNESPCEQTFSSRVQSLLNNIPFSSQEIDRFESVYGKWSTYSRRHQSGFEANFASLFTTESVLPTEMMASIEGVLSGEWNQYFAQIGFTQKNMEKIIKKLLSNVQEKGLEQIVVRGKRASGSFQPTEFLSNLLEKLRITRRQSSEQDPHAFVYIRHRDMDYAFLPIDADSIPEVVRSMIQGGRLEIGDIERVLAQGIHFSASNAAFLYETVRRVPTPMGLPVQFTSKMPTISSIRGQVTFELEPKNGKSFDGLRLRVQAGPRVASTHVLSLRVICPIAEVGTKFLHQAVLNTPVDTEIRMNWEDKVVIRAIYNTPSEEKRIAMIQSRPVTFTRTVAPDARQYPEPIEMTYMLPAHKQLSQSLDREYPQIRVQGTLNRPTSVRIPQWIVDSNVEVYYKPNVEQYEAIFELNLYNNYKMEKNYEKVYKKHNGRRYLEAEPEYDEEEHREQITKKFEWLQNEKVYQHVAKFEIKPEVVKMEVEAVCNNDFHFCKTQIRGEELKATIQYVYPQTPRTVEELKEQKYRQLVVMGEMNYGENTIHININGQQSQEQKKFVKQIEQAPEHETLLEASRLDQYQTVVEYEFEPKPAQYFARYWNMVQAYLRTQYPWTSRIETREEPSRKNMIRATINVEPRQRLTVNMTIETPMETTVLERVELPFRLPTAQIHYQPRNSRYEQKPVMEKIAHHASKQANCVVKSTKINTFDQVAYRNQFTPCYSVLAKDCGSEKSEPRFVVLMKKINEKKEWKNVKVVYGENEIEMYKTEEGLICRVNGEEIEYQPESEIEKKQYNIIWLNKNTLKFDSDDVTVQFDGVNARIHLSALYRNQQCGLCGHYDNEKETEFYDAENQENTIPKFAKSYLYKDSKCNYEREMFEKEENFQRIEKNQEEEKDQEMNYEESRREQDDEPTEQVAIVERQHEICFTQKPVLRCQNGKSQESKKQKVTSVYCLPSSNSWARRQMREIRREPLAQWPEHKLRNLRDQPQMEERTVRVAVDQKCDKFDY</sequence>
<dbReference type="EMBL" id="X56213">
    <property type="protein sequence ID" value="CAA39670.1"/>
    <property type="molecule type" value="Genomic_DNA"/>
</dbReference>
<dbReference type="EMBL" id="FO081300">
    <property type="protein sequence ID" value="CCD70603.1"/>
    <property type="molecule type" value="Genomic_DNA"/>
</dbReference>
<dbReference type="EMBL" id="FO081300">
    <property type="protein sequence ID" value="CCD70604.1"/>
    <property type="molecule type" value="Genomic_DNA"/>
</dbReference>
<dbReference type="EMBL" id="FO081300">
    <property type="protein sequence ID" value="CCD70605.1"/>
    <property type="molecule type" value="Genomic_DNA"/>
</dbReference>
<dbReference type="EMBL" id="M11499">
    <property type="protein sequence ID" value="AAA28165.1"/>
    <property type="molecule type" value="Genomic_DNA"/>
</dbReference>
<dbReference type="EMBL" id="X02756">
    <property type="protein sequence ID" value="CAA26533.1"/>
    <property type="molecule type" value="Genomic_DNA"/>
</dbReference>
<dbReference type="PIR" id="B43081">
    <property type="entry name" value="B43081"/>
</dbReference>
<dbReference type="PIR" id="F88750">
    <property type="entry name" value="F88750"/>
</dbReference>
<dbReference type="RefSeq" id="NP_001023274.1">
    <molecule id="P18948-2"/>
    <property type="nucleotide sequence ID" value="NM_001028103.4"/>
</dbReference>
<dbReference type="RefSeq" id="NP_001023275.1">
    <property type="nucleotide sequence ID" value="NM_001028104.5"/>
</dbReference>
<dbReference type="RefSeq" id="NP_001023276.1">
    <molecule id="P18948-1"/>
    <property type="nucleotide sequence ID" value="NM_001028105.7"/>
</dbReference>
<dbReference type="SMR" id="P18948"/>
<dbReference type="BioGRID" id="42732">
    <property type="interactions" value="28"/>
</dbReference>
<dbReference type="FunCoup" id="P18948">
    <property type="interactions" value="380"/>
</dbReference>
<dbReference type="IntAct" id="P18948">
    <property type="interactions" value="5"/>
</dbReference>
<dbReference type="STRING" id="6239.K07H8.6c.1"/>
<dbReference type="GlyCosmos" id="P18948">
    <property type="glycosylation" value="2 sites, No reported glycans"/>
</dbReference>
<dbReference type="iPTMnet" id="P18948"/>
<dbReference type="PaxDb" id="6239-K07H8.6c"/>
<dbReference type="PeptideAtlas" id="P18948"/>
<dbReference type="EnsemblMetazoa" id="K07H8.6a.1">
    <molecule id="P18948-2"/>
    <property type="protein sequence ID" value="K07H8.6a.1"/>
    <property type="gene ID" value="WBGene00006930"/>
</dbReference>
<dbReference type="EnsemblMetazoa" id="K07H8.6c.1">
    <molecule id="P18948-1"/>
    <property type="protein sequence ID" value="K07H8.6c.1"/>
    <property type="gene ID" value="WBGene00006930"/>
</dbReference>
<dbReference type="GeneID" id="177619"/>
<dbReference type="KEGG" id="cel:CELE_K07H8.6"/>
<dbReference type="UCSC" id="K07H8.6b">
    <molecule id="P18948-1"/>
    <property type="organism name" value="c. elegans"/>
</dbReference>
<dbReference type="AGR" id="WB:WBGene00006930"/>
<dbReference type="CTD" id="177619"/>
<dbReference type="WormBase" id="K07H8.6a">
    <molecule id="P18948-2"/>
    <property type="protein sequence ID" value="CE28594"/>
    <property type="gene ID" value="WBGene00006930"/>
    <property type="gene designation" value="vit-6"/>
</dbReference>
<dbReference type="WormBase" id="K07H8.6c">
    <molecule id="P18948-1"/>
    <property type="protein sequence ID" value="CE18026"/>
    <property type="gene ID" value="WBGene00006930"/>
    <property type="gene designation" value="vit-6"/>
</dbReference>
<dbReference type="eggNOG" id="KOG4338">
    <property type="taxonomic scope" value="Eukaryota"/>
</dbReference>
<dbReference type="GeneTree" id="ENSGT00530000064273"/>
<dbReference type="HOGENOM" id="CLU_003821_0_0_1"/>
<dbReference type="InParanoid" id="P18948"/>
<dbReference type="OMA" id="DMRPANG"/>
<dbReference type="OrthoDB" id="5825149at2759"/>
<dbReference type="PhylomeDB" id="P18948"/>
<dbReference type="PRO" id="PR:P18948"/>
<dbReference type="Proteomes" id="UP000001940">
    <property type="component" value="Chromosome IV"/>
</dbReference>
<dbReference type="Bgee" id="WBGene00006930">
    <property type="expression patterns" value="Expressed in adult organism and 2 other cell types or tissues"/>
</dbReference>
<dbReference type="GO" id="GO:0005576">
    <property type="term" value="C:extracellular region"/>
    <property type="evidence" value="ECO:0007669"/>
    <property type="project" value="UniProtKB-SubCell"/>
</dbReference>
<dbReference type="GO" id="GO:0005319">
    <property type="term" value="F:lipid transporter activity"/>
    <property type="evidence" value="ECO:0000318"/>
    <property type="project" value="GO_Central"/>
</dbReference>
<dbReference type="GO" id="GO:0045735">
    <property type="term" value="F:nutrient reservoir activity"/>
    <property type="evidence" value="ECO:0007669"/>
    <property type="project" value="UniProtKB-KW"/>
</dbReference>
<dbReference type="GO" id="GO:1904807">
    <property type="term" value="P:negative regulation of protein oxidation"/>
    <property type="evidence" value="ECO:0000316"/>
    <property type="project" value="UniProtKB"/>
</dbReference>
<dbReference type="GO" id="GO:1903427">
    <property type="term" value="P:negative regulation of reactive oxygen species biosynthetic process"/>
    <property type="evidence" value="ECO:0000316"/>
    <property type="project" value="UniProtKB"/>
</dbReference>
<dbReference type="GO" id="GO:1904109">
    <property type="term" value="P:positive regulation of cholesterol import"/>
    <property type="evidence" value="ECO:0000315"/>
    <property type="project" value="UniProtKB"/>
</dbReference>
<dbReference type="FunFam" id="1.25.10.20:FF:000003">
    <property type="entry name" value="Vitellogenin C"/>
    <property type="match status" value="1"/>
</dbReference>
<dbReference type="FunFam" id="2.30.230.10:FF:000004">
    <property type="entry name" value="Vitellogenin-1"/>
    <property type="match status" value="1"/>
</dbReference>
<dbReference type="Gene3D" id="2.30.230.10">
    <property type="entry name" value="Lipovitellin, beta-sheet shell regions, chain A"/>
    <property type="match status" value="1"/>
</dbReference>
<dbReference type="Gene3D" id="2.20.80.10">
    <property type="entry name" value="Lipovitellin-phosvitin complex, chain A, domain 4"/>
    <property type="match status" value="1"/>
</dbReference>
<dbReference type="Gene3D" id="1.25.10.20">
    <property type="entry name" value="Vitellinogen, superhelical"/>
    <property type="match status" value="1"/>
</dbReference>
<dbReference type="InterPro" id="IPR015819">
    <property type="entry name" value="Lipid_transp_b-sht_shell"/>
</dbReference>
<dbReference type="InterPro" id="IPR011030">
    <property type="entry name" value="Lipovitellin_superhlx_dom"/>
</dbReference>
<dbReference type="InterPro" id="IPR015816">
    <property type="entry name" value="Vitellinogen_b-sht_N"/>
</dbReference>
<dbReference type="InterPro" id="IPR015255">
    <property type="entry name" value="Vitellinogen_open_b-sht"/>
</dbReference>
<dbReference type="InterPro" id="IPR050733">
    <property type="entry name" value="Vitellogenin/Apolipophorin"/>
</dbReference>
<dbReference type="InterPro" id="IPR001747">
    <property type="entry name" value="Vitellogenin_N"/>
</dbReference>
<dbReference type="InterPro" id="IPR001846">
    <property type="entry name" value="VWF_type-D"/>
</dbReference>
<dbReference type="PANTHER" id="PTHR23345:SF15">
    <property type="entry name" value="VITELLOGENIN 1-RELATED"/>
    <property type="match status" value="1"/>
</dbReference>
<dbReference type="PANTHER" id="PTHR23345">
    <property type="entry name" value="VITELLOGENIN-RELATED"/>
    <property type="match status" value="1"/>
</dbReference>
<dbReference type="Pfam" id="PF09172">
    <property type="entry name" value="Vit_open_b-sht"/>
    <property type="match status" value="1"/>
</dbReference>
<dbReference type="Pfam" id="PF01347">
    <property type="entry name" value="Vitellogenin_N"/>
    <property type="match status" value="1"/>
</dbReference>
<dbReference type="Pfam" id="PF00094">
    <property type="entry name" value="VWD"/>
    <property type="match status" value="1"/>
</dbReference>
<dbReference type="SMART" id="SM01169">
    <property type="entry name" value="DUF1943"/>
    <property type="match status" value="1"/>
</dbReference>
<dbReference type="SMART" id="SM00638">
    <property type="entry name" value="LPD_N"/>
    <property type="match status" value="1"/>
</dbReference>
<dbReference type="SMART" id="SM00216">
    <property type="entry name" value="VWD"/>
    <property type="match status" value="1"/>
</dbReference>
<dbReference type="SUPFAM" id="SSF56968">
    <property type="entry name" value="Lipovitellin-phosvitin complex, beta-sheet shell regions"/>
    <property type="match status" value="2"/>
</dbReference>
<dbReference type="SUPFAM" id="SSF48431">
    <property type="entry name" value="Lipovitellin-phosvitin complex, superhelical domain"/>
    <property type="match status" value="1"/>
</dbReference>
<dbReference type="PROSITE" id="PS51211">
    <property type="entry name" value="VITELLOGENIN"/>
    <property type="match status" value="1"/>
</dbReference>
<dbReference type="PROSITE" id="PS51233">
    <property type="entry name" value="VWFD"/>
    <property type="match status" value="1"/>
</dbReference>
<organism>
    <name type="scientific">Caenorhabditis elegans</name>
    <dbReference type="NCBI Taxonomy" id="6239"/>
    <lineage>
        <taxon>Eukaryota</taxon>
        <taxon>Metazoa</taxon>
        <taxon>Ecdysozoa</taxon>
        <taxon>Nematoda</taxon>
        <taxon>Chromadorea</taxon>
        <taxon>Rhabditida</taxon>
        <taxon>Rhabditina</taxon>
        <taxon>Rhabditomorpha</taxon>
        <taxon>Rhabditoidea</taxon>
        <taxon>Rhabditidae</taxon>
        <taxon>Peloderinae</taxon>
        <taxon>Caenorhabditis</taxon>
    </lineage>
</organism>
<accession>P18948</accession>
<accession>O45176</accession>
<accession>Q7KPP7</accession>
<accession>Q7YXH2</accession>
<evidence type="ECO:0000255" key="1"/>
<evidence type="ECO:0000255" key="2">
    <source>
        <dbReference type="PROSITE-ProRule" id="PRU00557"/>
    </source>
</evidence>
<evidence type="ECO:0000255" key="3">
    <source>
        <dbReference type="PROSITE-ProRule" id="PRU00580"/>
    </source>
</evidence>
<evidence type="ECO:0000256" key="4">
    <source>
        <dbReference type="SAM" id="MobiDB-lite"/>
    </source>
</evidence>
<evidence type="ECO:0000269" key="5">
    <source>
    </source>
</evidence>
<evidence type="ECO:0000269" key="6">
    <source>
    </source>
</evidence>
<evidence type="ECO:0000269" key="7">
    <source>
    </source>
</evidence>
<evidence type="ECO:0000305" key="8"/>
<reference key="1">
    <citation type="journal article" date="1991" name="J. Mol. Evol.">
        <title>Vitellogenin motifs conserved in nematodes and vertebrates.</title>
        <authorList>
            <person name="Spieth J."/>
            <person name="Nettleton M."/>
            <person name="Zucker-Aprison E."/>
            <person name="Lea K."/>
            <person name="Blumenthal T."/>
        </authorList>
    </citation>
    <scope>NUCLEOTIDE SEQUENCE [GENOMIC DNA]</scope>
    <scope>ALTERNATIVE SPLICING (ISOFORM A)</scope>
    <source>
        <strain>Bristol N2</strain>
    </source>
</reference>
<reference key="2">
    <citation type="journal article" date="1998" name="Science">
        <title>Genome sequence of the nematode C. elegans: a platform for investigating biology.</title>
        <authorList>
            <consortium name="The C. elegans sequencing consortium"/>
        </authorList>
    </citation>
    <scope>NUCLEOTIDE SEQUENCE [LARGE SCALE GENOMIC DNA]</scope>
    <scope>ALTERNATIVE SPLICING</scope>
    <source>
        <strain>Bristol N2</strain>
    </source>
</reference>
<reference key="3">
    <citation type="journal article" date="1985" name="Mol. Cell. Biol.">
        <title>The Caenorhabditis elegans vitellogenin gene family includes a gene encoding a distantly related protein.</title>
        <authorList>
            <person name="Spieth J."/>
            <person name="Blumenthal T."/>
        </authorList>
    </citation>
    <scope>NUCLEOTIDE SEQUENCE [GENOMIC DNA] OF 1-259</scope>
</reference>
<reference key="4">
    <citation type="journal article" date="1985" name="Nucleic Acids Res.">
        <title>The C. elegans vitellogenin genes: short sequence repeats in the promoter regions and homology to the vertebrate genes.</title>
        <authorList>
            <person name="Spieth J."/>
            <person name="Denison K."/>
            <person name="Kirtland S."/>
            <person name="Cane J."/>
            <person name="Blumenthal T."/>
        </authorList>
    </citation>
    <scope>NUCLEOTIDE SEQUENCE [GENOMIC DNA] OF 1-23</scope>
</reference>
<reference key="5">
    <citation type="journal article" date="1999" name="Biochem. Biophys. Res. Commun.">
        <title>Vitellogenin-6 is a major carbonylated protein in aged nematode, Caenorhabditis elegans.</title>
        <authorList>
            <person name="Nakamura A."/>
            <person name="Yasuda K."/>
            <person name="Adachi H."/>
            <person name="Sakurai Y."/>
            <person name="Ishii N."/>
            <person name="Goto S."/>
        </authorList>
    </citation>
    <scope>PROTEIN SEQUENCE OF 779-780 AND 1220-1232</scope>
</reference>
<reference key="6">
    <citation type="journal article" date="2005" name="Glycobiology">
        <title>Identification of the hydrophobic glycoproteins of Caenorhabditis elegans.</title>
        <authorList>
            <person name="Fan X."/>
            <person name="She Y.-M."/>
            <person name="Bagshaw R.D."/>
            <person name="Callahan J.W."/>
            <person name="Schachter H."/>
            <person name="Mahuran D.J."/>
        </authorList>
    </citation>
    <scope>GLYCOSYLATION [LARGE SCALE ANALYSIS] AT ASN-252 AND ASN-1288</scope>
    <scope>IDENTIFICATION BY MASS SPECTROMETRY</scope>
</reference>
<reference key="7">
    <citation type="journal article" date="2007" name="Mol. Cell. Proteomics">
        <title>Proteomics reveals N-linked glycoprotein diversity in Caenorhabditis elegans and suggests an atypical translocation mechanism for integral membrane proteins.</title>
        <authorList>
            <person name="Kaji H."/>
            <person name="Kamiie J."/>
            <person name="Kawakami H."/>
            <person name="Kido K."/>
            <person name="Yamauchi Y."/>
            <person name="Shinkawa T."/>
            <person name="Taoka M."/>
            <person name="Takahashi N."/>
            <person name="Isobe T."/>
        </authorList>
    </citation>
    <scope>GLYCOSYLATION [LARGE SCALE ANALYSIS] AT ASN-1288</scope>
    <scope>IDENTIFICATION BY MASS SPECTROMETRY</scope>
    <source>
        <strain>Bristol N2</strain>
    </source>
</reference>
<reference key="8">
    <citation type="journal article" date="2014" name="Genes Nutr.">
        <title>The zinc matrix metalloproteinase ZMP-2 increases survival of Caenorhabditis elegans through interference with lipoprotein absorption.</title>
        <authorList>
            <person name="Fischer M."/>
            <person name="Fitzenberger E."/>
            <person name="Kull R."/>
            <person name="Boll M."/>
            <person name="Wenzel U."/>
        </authorList>
    </citation>
    <scope>FUNCTION</scope>
    <scope>DISRUPTION PHENOTYPE</scope>
</reference>
<protein>
    <recommendedName>
        <fullName>Vitellogenin-6</fullName>
    </recommendedName>
</protein>
<proteinExistence type="evidence at protein level"/>